<protein>
    <recommendedName>
        <fullName evidence="1">Aspartate--tRNA(Asp/Asn) ligase</fullName>
        <ecNumber evidence="1">6.1.1.23</ecNumber>
    </recommendedName>
    <alternativeName>
        <fullName evidence="1">Aspartyl-tRNA synthetase</fullName>
        <shortName evidence="1">AspRS</shortName>
    </alternativeName>
    <alternativeName>
        <fullName evidence="1">Non-discriminating aspartyl-tRNA synthetase</fullName>
        <shortName evidence="1">ND-AspRS</shortName>
    </alternativeName>
</protein>
<keyword id="KW-0030">Aminoacyl-tRNA synthetase</keyword>
<keyword id="KW-0067">ATP-binding</keyword>
<keyword id="KW-0963">Cytoplasm</keyword>
<keyword id="KW-0436">Ligase</keyword>
<keyword id="KW-0547">Nucleotide-binding</keyword>
<keyword id="KW-0648">Protein biosynthesis</keyword>
<keyword id="KW-1185">Reference proteome</keyword>
<comment type="function">
    <text evidence="1">Aspartyl-tRNA synthetase with relaxed tRNA specificity since it is able to aspartylate not only its cognate tRNA(Asp) but also tRNA(Asn). Reaction proceeds in two steps: L-aspartate is first activated by ATP to form Asp-AMP and then transferred to the acceptor end of tRNA(Asp/Asn).</text>
</comment>
<comment type="catalytic activity">
    <reaction evidence="1">
        <text>tRNA(Asx) + L-aspartate + ATP = L-aspartyl-tRNA(Asx) + AMP + diphosphate</text>
        <dbReference type="Rhea" id="RHEA:18349"/>
        <dbReference type="Rhea" id="RHEA-COMP:9710"/>
        <dbReference type="Rhea" id="RHEA-COMP:9711"/>
        <dbReference type="ChEBI" id="CHEBI:29991"/>
        <dbReference type="ChEBI" id="CHEBI:30616"/>
        <dbReference type="ChEBI" id="CHEBI:33019"/>
        <dbReference type="ChEBI" id="CHEBI:78442"/>
        <dbReference type="ChEBI" id="CHEBI:78516"/>
        <dbReference type="ChEBI" id="CHEBI:456215"/>
        <dbReference type="EC" id="6.1.1.23"/>
    </reaction>
</comment>
<comment type="subunit">
    <text evidence="1">Homodimer.</text>
</comment>
<comment type="subcellular location">
    <subcellularLocation>
        <location evidence="1">Cytoplasm</location>
    </subcellularLocation>
</comment>
<comment type="similarity">
    <text evidence="1">Belongs to the class-II aminoacyl-tRNA synthetase family. Type 1 subfamily.</text>
</comment>
<proteinExistence type="inferred from homology"/>
<reference key="1">
    <citation type="journal article" date="2004" name="Proc. Natl. Acad. Sci. U.S.A.">
        <title>Comparison of the genome of the oral pathogen Treponema denticola with other spirochete genomes.</title>
        <authorList>
            <person name="Seshadri R."/>
            <person name="Myers G.S.A."/>
            <person name="Tettelin H."/>
            <person name="Eisen J.A."/>
            <person name="Heidelberg J.F."/>
            <person name="Dodson R.J."/>
            <person name="Davidsen T.M."/>
            <person name="DeBoy R.T."/>
            <person name="Fouts D.E."/>
            <person name="Haft D.H."/>
            <person name="Selengut J."/>
            <person name="Ren Q."/>
            <person name="Brinkac L.M."/>
            <person name="Madupu R."/>
            <person name="Kolonay J.F."/>
            <person name="Durkin S.A."/>
            <person name="Daugherty S.C."/>
            <person name="Shetty J."/>
            <person name="Shvartsbeyn A."/>
            <person name="Gebregeorgis E."/>
            <person name="Geer K."/>
            <person name="Tsegaye G."/>
            <person name="Malek J.A."/>
            <person name="Ayodeji B."/>
            <person name="Shatsman S."/>
            <person name="McLeod M.P."/>
            <person name="Smajs D."/>
            <person name="Howell J.K."/>
            <person name="Pal S."/>
            <person name="Amin A."/>
            <person name="Vashisth P."/>
            <person name="McNeill T.Z."/>
            <person name="Xiang Q."/>
            <person name="Sodergren E."/>
            <person name="Baca E."/>
            <person name="Weinstock G.M."/>
            <person name="Norris S.J."/>
            <person name="Fraser C.M."/>
            <person name="Paulsen I.T."/>
        </authorList>
    </citation>
    <scope>NUCLEOTIDE SEQUENCE [LARGE SCALE GENOMIC DNA]</scope>
    <source>
        <strain>ATCC 35405 / DSM 14222 / CIP 103919 / JCM 8153 / KCTC 15104</strain>
    </source>
</reference>
<accession>Q73MC2</accession>
<dbReference type="EC" id="6.1.1.23" evidence="1"/>
<dbReference type="EMBL" id="AE017226">
    <property type="protein sequence ID" value="AAS12104.1"/>
    <property type="molecule type" value="Genomic_DNA"/>
</dbReference>
<dbReference type="RefSeq" id="NP_972193.1">
    <property type="nucleotide sequence ID" value="NC_002967.9"/>
</dbReference>
<dbReference type="SMR" id="Q73MC2"/>
<dbReference type="STRING" id="243275.TDE_1587"/>
<dbReference type="PaxDb" id="243275-TDE_1587"/>
<dbReference type="KEGG" id="tde:TDE_1587"/>
<dbReference type="PATRIC" id="fig|243275.7.peg.1517"/>
<dbReference type="eggNOG" id="COG0173">
    <property type="taxonomic scope" value="Bacteria"/>
</dbReference>
<dbReference type="HOGENOM" id="CLU_014330_3_2_12"/>
<dbReference type="OrthoDB" id="9802326at2"/>
<dbReference type="Proteomes" id="UP000008212">
    <property type="component" value="Chromosome"/>
</dbReference>
<dbReference type="GO" id="GO:0005737">
    <property type="term" value="C:cytoplasm"/>
    <property type="evidence" value="ECO:0007669"/>
    <property type="project" value="UniProtKB-SubCell"/>
</dbReference>
<dbReference type="GO" id="GO:0004815">
    <property type="term" value="F:aspartate-tRNA ligase activity"/>
    <property type="evidence" value="ECO:0007669"/>
    <property type="project" value="UniProtKB-UniRule"/>
</dbReference>
<dbReference type="GO" id="GO:0050560">
    <property type="term" value="F:aspartate-tRNA(Asn) ligase activity"/>
    <property type="evidence" value="ECO:0007669"/>
    <property type="project" value="UniProtKB-EC"/>
</dbReference>
<dbReference type="GO" id="GO:0005524">
    <property type="term" value="F:ATP binding"/>
    <property type="evidence" value="ECO:0007669"/>
    <property type="project" value="UniProtKB-UniRule"/>
</dbReference>
<dbReference type="GO" id="GO:0003676">
    <property type="term" value="F:nucleic acid binding"/>
    <property type="evidence" value="ECO:0007669"/>
    <property type="project" value="InterPro"/>
</dbReference>
<dbReference type="GO" id="GO:0006422">
    <property type="term" value="P:aspartyl-tRNA aminoacylation"/>
    <property type="evidence" value="ECO:0007669"/>
    <property type="project" value="UniProtKB-UniRule"/>
</dbReference>
<dbReference type="CDD" id="cd00777">
    <property type="entry name" value="AspRS_core"/>
    <property type="match status" value="1"/>
</dbReference>
<dbReference type="CDD" id="cd04317">
    <property type="entry name" value="EcAspRS_like_N"/>
    <property type="match status" value="1"/>
</dbReference>
<dbReference type="Gene3D" id="3.30.930.10">
    <property type="entry name" value="Bira Bifunctional Protein, Domain 2"/>
    <property type="match status" value="1"/>
</dbReference>
<dbReference type="Gene3D" id="3.30.1360.30">
    <property type="entry name" value="GAD-like domain"/>
    <property type="match status" value="1"/>
</dbReference>
<dbReference type="Gene3D" id="2.40.50.140">
    <property type="entry name" value="Nucleic acid-binding proteins"/>
    <property type="match status" value="1"/>
</dbReference>
<dbReference type="HAMAP" id="MF_00044">
    <property type="entry name" value="Asp_tRNA_synth_type1"/>
    <property type="match status" value="1"/>
</dbReference>
<dbReference type="InterPro" id="IPR004364">
    <property type="entry name" value="Aa-tRNA-synt_II"/>
</dbReference>
<dbReference type="InterPro" id="IPR006195">
    <property type="entry name" value="aa-tRNA-synth_II"/>
</dbReference>
<dbReference type="InterPro" id="IPR045864">
    <property type="entry name" value="aa-tRNA-synth_II/BPL/LPL"/>
</dbReference>
<dbReference type="InterPro" id="IPR004524">
    <property type="entry name" value="Asp-tRNA-ligase_1"/>
</dbReference>
<dbReference type="InterPro" id="IPR047089">
    <property type="entry name" value="Asp-tRNA-ligase_1_N"/>
</dbReference>
<dbReference type="InterPro" id="IPR002312">
    <property type="entry name" value="Asp/Asn-tRNA-synth_IIb"/>
</dbReference>
<dbReference type="InterPro" id="IPR047090">
    <property type="entry name" value="AspRS_core"/>
</dbReference>
<dbReference type="InterPro" id="IPR004115">
    <property type="entry name" value="GAD-like_sf"/>
</dbReference>
<dbReference type="InterPro" id="IPR029351">
    <property type="entry name" value="GAD_dom"/>
</dbReference>
<dbReference type="InterPro" id="IPR012340">
    <property type="entry name" value="NA-bd_OB-fold"/>
</dbReference>
<dbReference type="InterPro" id="IPR004365">
    <property type="entry name" value="NA-bd_OB_tRNA"/>
</dbReference>
<dbReference type="NCBIfam" id="TIGR00459">
    <property type="entry name" value="aspS_bact"/>
    <property type="match status" value="1"/>
</dbReference>
<dbReference type="NCBIfam" id="NF001750">
    <property type="entry name" value="PRK00476.1"/>
    <property type="match status" value="1"/>
</dbReference>
<dbReference type="PANTHER" id="PTHR22594:SF5">
    <property type="entry name" value="ASPARTATE--TRNA LIGASE, MITOCHONDRIAL"/>
    <property type="match status" value="1"/>
</dbReference>
<dbReference type="PANTHER" id="PTHR22594">
    <property type="entry name" value="ASPARTYL/LYSYL-TRNA SYNTHETASE"/>
    <property type="match status" value="1"/>
</dbReference>
<dbReference type="Pfam" id="PF02938">
    <property type="entry name" value="GAD"/>
    <property type="match status" value="1"/>
</dbReference>
<dbReference type="Pfam" id="PF00152">
    <property type="entry name" value="tRNA-synt_2"/>
    <property type="match status" value="1"/>
</dbReference>
<dbReference type="Pfam" id="PF01336">
    <property type="entry name" value="tRNA_anti-codon"/>
    <property type="match status" value="1"/>
</dbReference>
<dbReference type="PRINTS" id="PR01042">
    <property type="entry name" value="TRNASYNTHASP"/>
</dbReference>
<dbReference type="SUPFAM" id="SSF55681">
    <property type="entry name" value="Class II aaRS and biotin synthetases"/>
    <property type="match status" value="1"/>
</dbReference>
<dbReference type="SUPFAM" id="SSF55261">
    <property type="entry name" value="GAD domain-like"/>
    <property type="match status" value="1"/>
</dbReference>
<dbReference type="SUPFAM" id="SSF50249">
    <property type="entry name" value="Nucleic acid-binding proteins"/>
    <property type="match status" value="1"/>
</dbReference>
<dbReference type="PROSITE" id="PS50862">
    <property type="entry name" value="AA_TRNA_LIGASE_II"/>
    <property type="match status" value="1"/>
</dbReference>
<gene>
    <name evidence="1" type="primary">aspS</name>
    <name type="ordered locus">TDE_1587</name>
</gene>
<sequence>MEKMQRTVTCGGLNKDFAGKTVVLNGWIHRKRDHGGITFLNLRDRYGLTQVVVDDDASEDLKALAVSLKQEFCIAVEGLVRPRPDSMINKEMATGEIEVKALKIEVLSKSEVLPFQIDEKTNANEDLRLKYRYLDLRSKAMQEHIMLRSKFTFAVREFLTSKDFLEIETPTFIKSTPEGARDYLVPSRLYPGKFYALPQSPQIYKQILMVSGFDKYFQIARCYRDEDARGDRQPEFTQIDLEMSFASREDVLSLTEGMMQYAFKKSINVDLPKTFERISYDEAIDIYGTDKPDLRFEMKMQDAAFMAEIGNFAVFKDAVSLGGAVKALVVKGQAEAYSRKKIEELEAAAKIYKAKGLAWIKVTEGGAKLEGGVSKFFEGKEAEICSKLGAEKGDLILFVADKYKIACTALGAVRSKLGKDLGLLNPAEFKFAWIVDFPLFEWNEEENKWDPAHHMFSAPQEKYIATMEENPEPVKGDLYDLVLNGYEVASGSIRIHNPELQKRIFKIVGFDESEAEKKFGFLTEAFKYGAPPHGGIAPGLDRIVMIMAGETSIKEVIAFPKNSFAVSPMDDSPSEVDQKQLDELHLVIKE</sequence>
<name>SYDND_TREDE</name>
<organism>
    <name type="scientific">Treponema denticola (strain ATCC 35405 / DSM 14222 / CIP 103919 / JCM 8153 / KCTC 15104)</name>
    <dbReference type="NCBI Taxonomy" id="243275"/>
    <lineage>
        <taxon>Bacteria</taxon>
        <taxon>Pseudomonadati</taxon>
        <taxon>Spirochaetota</taxon>
        <taxon>Spirochaetia</taxon>
        <taxon>Spirochaetales</taxon>
        <taxon>Treponemataceae</taxon>
        <taxon>Treponema</taxon>
    </lineage>
</organism>
<feature type="chain" id="PRO_0000110973" description="Aspartate--tRNA(Asp/Asn) ligase">
    <location>
        <begin position="1"/>
        <end position="590"/>
    </location>
</feature>
<feature type="region of interest" description="Aspartate" evidence="1">
    <location>
        <begin position="202"/>
        <end position="205"/>
    </location>
</feature>
<feature type="binding site" evidence="1">
    <location>
        <position position="178"/>
    </location>
    <ligand>
        <name>L-aspartate</name>
        <dbReference type="ChEBI" id="CHEBI:29991"/>
    </ligand>
</feature>
<feature type="binding site" evidence="1">
    <location>
        <begin position="224"/>
        <end position="226"/>
    </location>
    <ligand>
        <name>ATP</name>
        <dbReference type="ChEBI" id="CHEBI:30616"/>
    </ligand>
</feature>
<feature type="binding site" evidence="1">
    <location>
        <position position="224"/>
    </location>
    <ligand>
        <name>L-aspartate</name>
        <dbReference type="ChEBI" id="CHEBI:29991"/>
    </ligand>
</feature>
<feature type="binding site" evidence="1">
    <location>
        <position position="233"/>
    </location>
    <ligand>
        <name>ATP</name>
        <dbReference type="ChEBI" id="CHEBI:30616"/>
    </ligand>
</feature>
<feature type="binding site" evidence="1">
    <location>
        <position position="453"/>
    </location>
    <ligand>
        <name>L-aspartate</name>
        <dbReference type="ChEBI" id="CHEBI:29991"/>
    </ligand>
</feature>
<feature type="binding site" evidence="1">
    <location>
        <position position="487"/>
    </location>
    <ligand>
        <name>ATP</name>
        <dbReference type="ChEBI" id="CHEBI:30616"/>
    </ligand>
</feature>
<feature type="binding site" evidence="1">
    <location>
        <position position="494"/>
    </location>
    <ligand>
        <name>L-aspartate</name>
        <dbReference type="ChEBI" id="CHEBI:29991"/>
    </ligand>
</feature>
<feature type="binding site" evidence="1">
    <location>
        <begin position="539"/>
        <end position="542"/>
    </location>
    <ligand>
        <name>ATP</name>
        <dbReference type="ChEBI" id="CHEBI:30616"/>
    </ligand>
</feature>
<feature type="site" description="Important for tRNA non-discrimination" evidence="1">
    <location>
        <position position="34"/>
    </location>
</feature>
<evidence type="ECO:0000255" key="1">
    <source>
        <dbReference type="HAMAP-Rule" id="MF_00044"/>
    </source>
</evidence>